<proteinExistence type="inferred from homology"/>
<name>SYR_LEPBJ</name>
<evidence type="ECO:0000255" key="1">
    <source>
        <dbReference type="HAMAP-Rule" id="MF_00123"/>
    </source>
</evidence>
<protein>
    <recommendedName>
        <fullName evidence="1">Arginine--tRNA ligase</fullName>
        <ecNumber evidence="1">6.1.1.19</ecNumber>
    </recommendedName>
    <alternativeName>
        <fullName evidence="1">Arginyl-tRNA synthetase</fullName>
        <shortName evidence="1">ArgRS</shortName>
    </alternativeName>
</protein>
<reference key="1">
    <citation type="journal article" date="2006" name="Proc. Natl. Acad. Sci. U.S.A.">
        <title>Genome reduction in Leptospira borgpetersenii reflects limited transmission potential.</title>
        <authorList>
            <person name="Bulach D.M."/>
            <person name="Zuerner R.L."/>
            <person name="Wilson P."/>
            <person name="Seemann T."/>
            <person name="McGrath A."/>
            <person name="Cullen P.A."/>
            <person name="Davis J."/>
            <person name="Johnson M."/>
            <person name="Kuczek E."/>
            <person name="Alt D.P."/>
            <person name="Peterson-Burch B."/>
            <person name="Coppel R.L."/>
            <person name="Rood J.I."/>
            <person name="Davies J.K."/>
            <person name="Adler B."/>
        </authorList>
    </citation>
    <scope>NUCLEOTIDE SEQUENCE [LARGE SCALE GENOMIC DNA]</scope>
    <source>
        <strain>JB197</strain>
    </source>
</reference>
<accession>Q04TG2</accession>
<gene>
    <name evidence="1" type="primary">argS</name>
    <name type="ordered locus">LBJ_1204</name>
</gene>
<comment type="catalytic activity">
    <reaction evidence="1">
        <text>tRNA(Arg) + L-arginine + ATP = L-arginyl-tRNA(Arg) + AMP + diphosphate</text>
        <dbReference type="Rhea" id="RHEA:20301"/>
        <dbReference type="Rhea" id="RHEA-COMP:9658"/>
        <dbReference type="Rhea" id="RHEA-COMP:9673"/>
        <dbReference type="ChEBI" id="CHEBI:30616"/>
        <dbReference type="ChEBI" id="CHEBI:32682"/>
        <dbReference type="ChEBI" id="CHEBI:33019"/>
        <dbReference type="ChEBI" id="CHEBI:78442"/>
        <dbReference type="ChEBI" id="CHEBI:78513"/>
        <dbReference type="ChEBI" id="CHEBI:456215"/>
        <dbReference type="EC" id="6.1.1.19"/>
    </reaction>
</comment>
<comment type="subunit">
    <text evidence="1">Monomer.</text>
</comment>
<comment type="subcellular location">
    <subcellularLocation>
        <location evidence="1">Cytoplasm</location>
    </subcellularLocation>
</comment>
<comment type="similarity">
    <text evidence="1">Belongs to the class-I aminoacyl-tRNA synthetase family.</text>
</comment>
<dbReference type="EC" id="6.1.1.19" evidence="1"/>
<dbReference type="EMBL" id="CP000350">
    <property type="protein sequence ID" value="ABJ75808.1"/>
    <property type="molecule type" value="Genomic_DNA"/>
</dbReference>
<dbReference type="RefSeq" id="WP_011669987.1">
    <property type="nucleotide sequence ID" value="NC_008510.1"/>
</dbReference>
<dbReference type="SMR" id="Q04TG2"/>
<dbReference type="KEGG" id="lbj:LBJ_1204"/>
<dbReference type="HOGENOM" id="CLU_006406_0_1_12"/>
<dbReference type="Proteomes" id="UP000000656">
    <property type="component" value="Chromosome 1"/>
</dbReference>
<dbReference type="GO" id="GO:0005737">
    <property type="term" value="C:cytoplasm"/>
    <property type="evidence" value="ECO:0007669"/>
    <property type="project" value="UniProtKB-SubCell"/>
</dbReference>
<dbReference type="GO" id="GO:0004814">
    <property type="term" value="F:arginine-tRNA ligase activity"/>
    <property type="evidence" value="ECO:0007669"/>
    <property type="project" value="UniProtKB-UniRule"/>
</dbReference>
<dbReference type="GO" id="GO:0005524">
    <property type="term" value="F:ATP binding"/>
    <property type="evidence" value="ECO:0007669"/>
    <property type="project" value="UniProtKB-UniRule"/>
</dbReference>
<dbReference type="GO" id="GO:0006420">
    <property type="term" value="P:arginyl-tRNA aminoacylation"/>
    <property type="evidence" value="ECO:0007669"/>
    <property type="project" value="UniProtKB-UniRule"/>
</dbReference>
<dbReference type="CDD" id="cd00671">
    <property type="entry name" value="ArgRS_core"/>
    <property type="match status" value="1"/>
</dbReference>
<dbReference type="FunFam" id="1.10.730.10:FF:000008">
    <property type="entry name" value="Arginine--tRNA ligase"/>
    <property type="match status" value="1"/>
</dbReference>
<dbReference type="FunFam" id="3.40.50.620:FF:000062">
    <property type="entry name" value="Arginine--tRNA ligase"/>
    <property type="match status" value="1"/>
</dbReference>
<dbReference type="Gene3D" id="3.30.1360.70">
    <property type="entry name" value="Arginyl tRNA synthetase N-terminal domain"/>
    <property type="match status" value="1"/>
</dbReference>
<dbReference type="Gene3D" id="3.40.50.620">
    <property type="entry name" value="HUPs"/>
    <property type="match status" value="1"/>
</dbReference>
<dbReference type="Gene3D" id="1.10.730.10">
    <property type="entry name" value="Isoleucyl-tRNA Synthetase, Domain 1"/>
    <property type="match status" value="1"/>
</dbReference>
<dbReference type="HAMAP" id="MF_00123">
    <property type="entry name" value="Arg_tRNA_synth"/>
    <property type="match status" value="1"/>
</dbReference>
<dbReference type="InterPro" id="IPR001278">
    <property type="entry name" value="Arg-tRNA-ligase"/>
</dbReference>
<dbReference type="InterPro" id="IPR005148">
    <property type="entry name" value="Arg-tRNA-synth_N"/>
</dbReference>
<dbReference type="InterPro" id="IPR036695">
    <property type="entry name" value="Arg-tRNA-synth_N_sf"/>
</dbReference>
<dbReference type="InterPro" id="IPR035684">
    <property type="entry name" value="ArgRS_core"/>
</dbReference>
<dbReference type="InterPro" id="IPR008909">
    <property type="entry name" value="DALR_anticod-bd"/>
</dbReference>
<dbReference type="InterPro" id="IPR014729">
    <property type="entry name" value="Rossmann-like_a/b/a_fold"/>
</dbReference>
<dbReference type="InterPro" id="IPR009080">
    <property type="entry name" value="tRNAsynth_Ia_anticodon-bd"/>
</dbReference>
<dbReference type="NCBIfam" id="TIGR00456">
    <property type="entry name" value="argS"/>
    <property type="match status" value="1"/>
</dbReference>
<dbReference type="PANTHER" id="PTHR11956:SF5">
    <property type="entry name" value="ARGININE--TRNA LIGASE, CYTOPLASMIC"/>
    <property type="match status" value="1"/>
</dbReference>
<dbReference type="PANTHER" id="PTHR11956">
    <property type="entry name" value="ARGINYL-TRNA SYNTHETASE"/>
    <property type="match status" value="1"/>
</dbReference>
<dbReference type="Pfam" id="PF03485">
    <property type="entry name" value="Arg_tRNA_synt_N"/>
    <property type="match status" value="1"/>
</dbReference>
<dbReference type="Pfam" id="PF05746">
    <property type="entry name" value="DALR_1"/>
    <property type="match status" value="1"/>
</dbReference>
<dbReference type="Pfam" id="PF00750">
    <property type="entry name" value="tRNA-synt_1d"/>
    <property type="match status" value="1"/>
</dbReference>
<dbReference type="PRINTS" id="PR01038">
    <property type="entry name" value="TRNASYNTHARG"/>
</dbReference>
<dbReference type="SMART" id="SM01016">
    <property type="entry name" value="Arg_tRNA_synt_N"/>
    <property type="match status" value="1"/>
</dbReference>
<dbReference type="SMART" id="SM00836">
    <property type="entry name" value="DALR_1"/>
    <property type="match status" value="1"/>
</dbReference>
<dbReference type="SUPFAM" id="SSF47323">
    <property type="entry name" value="Anticodon-binding domain of a subclass of class I aminoacyl-tRNA synthetases"/>
    <property type="match status" value="1"/>
</dbReference>
<dbReference type="SUPFAM" id="SSF55190">
    <property type="entry name" value="Arginyl-tRNA synthetase (ArgRS), N-terminal 'additional' domain"/>
    <property type="match status" value="1"/>
</dbReference>
<dbReference type="SUPFAM" id="SSF52374">
    <property type="entry name" value="Nucleotidylyl transferase"/>
    <property type="match status" value="1"/>
</dbReference>
<feature type="chain" id="PRO_1000198916" description="Arginine--tRNA ligase">
    <location>
        <begin position="1"/>
        <end position="586"/>
    </location>
</feature>
<feature type="short sequence motif" description="'HIGH' region">
    <location>
        <begin position="133"/>
        <end position="143"/>
    </location>
</feature>
<keyword id="KW-0030">Aminoacyl-tRNA synthetase</keyword>
<keyword id="KW-0067">ATP-binding</keyword>
<keyword id="KW-0963">Cytoplasm</keyword>
<keyword id="KW-0436">Ligase</keyword>
<keyword id="KW-0547">Nucleotide-binding</keyword>
<keyword id="KW-0648">Protein biosynthesis</keyword>
<sequence length="586" mass="66833">MKENETLKQIVLKSLEEGVDSLIVSFPDVEKSSLRIKIEYSRDEKFGDYSTSFSLENSKLLKRNPIQVSKELVEILQKRTDLFEKVDFTPPGFVNFKISPSYLLEYIEKSILSGDHFPKVEHPLKINLEFVSANPTGPLNIVSARAAANGDTMASLLKAIGHNVDKEFYINDYGNQVFLLGVSTLVRIREIKGEFSTRQEADDTTPIDTILEKNILPAEGYRGEYIKDIANALLNEPKKSSQIETLLKEKKYRELAELCSIWTVENNLDWQRKDLDSFGVEFDNYFRERTLHESDKVLAVMKDLERVGKIFEEDGKKIFRSTEYGDDKDRVVVRDDGRPTYLLADIAYHKDKIERGYDRIYDIWGPDHHGYISRLSGAVQTLGYKKENFKVIISQQVNLLESGQKVKMSKRAGSFQTMSDLIGFLGKHGKDVGRYFFVMRSLDAPLDFDLDLAQDQSDKNPVFYLQYAHARICSIFREVGTESSAEAAESLEMSEERKRLLFWIARFPEEIFDSANSMEPHRVANYLQSFAKAFTGFYLGKNNRLKDATPEVRLGLARICLAARSVLAEGLGLIGVSAPEKMEKES</sequence>
<organism>
    <name type="scientific">Leptospira borgpetersenii serovar Hardjo-bovis (strain JB197)</name>
    <dbReference type="NCBI Taxonomy" id="355277"/>
    <lineage>
        <taxon>Bacteria</taxon>
        <taxon>Pseudomonadati</taxon>
        <taxon>Spirochaetota</taxon>
        <taxon>Spirochaetia</taxon>
        <taxon>Leptospirales</taxon>
        <taxon>Leptospiraceae</taxon>
        <taxon>Leptospira</taxon>
    </lineage>
</organism>